<name>PANB_BURTA</name>
<reference key="1">
    <citation type="journal article" date="2005" name="BMC Genomics">
        <title>Bacterial genome adaptation to niches: divergence of the potential virulence genes in three Burkholderia species of different survival strategies.</title>
        <authorList>
            <person name="Kim H.S."/>
            <person name="Schell M.A."/>
            <person name="Yu Y."/>
            <person name="Ulrich R.L."/>
            <person name="Sarria S.H."/>
            <person name="Nierman W.C."/>
            <person name="DeShazer D."/>
        </authorList>
    </citation>
    <scope>NUCLEOTIDE SEQUENCE [LARGE SCALE GENOMIC DNA]</scope>
    <source>
        <strain>ATCC 700388 / DSM 13276 / CCUG 48851 / CIP 106301 / E264</strain>
    </source>
</reference>
<dbReference type="EC" id="2.1.2.11" evidence="1"/>
<dbReference type="EMBL" id="CP000086">
    <property type="protein sequence ID" value="ABC38840.1"/>
    <property type="status" value="ALT_INIT"/>
    <property type="molecule type" value="Genomic_DNA"/>
</dbReference>
<dbReference type="RefSeq" id="WP_025369782.1">
    <property type="nucleotide sequence ID" value="NZ_CP008785.1"/>
</dbReference>
<dbReference type="PDB" id="3VAV">
    <property type="method" value="X-ray"/>
    <property type="resolution" value="1.80 A"/>
    <property type="chains" value="A/B/C/D/E/F/G/H/I/J=1-271"/>
</dbReference>
<dbReference type="PDBsum" id="3VAV"/>
<dbReference type="SMR" id="Q2SYZ1"/>
<dbReference type="GeneID" id="45121055"/>
<dbReference type="KEGG" id="bte:BTH_I1311"/>
<dbReference type="HOGENOM" id="CLU_036645_1_0_4"/>
<dbReference type="UniPathway" id="UPA00028">
    <property type="reaction ID" value="UER00003"/>
</dbReference>
<dbReference type="EvolutionaryTrace" id="Q2SYZ1"/>
<dbReference type="Proteomes" id="UP000001930">
    <property type="component" value="Chromosome I"/>
</dbReference>
<dbReference type="GO" id="GO:0005737">
    <property type="term" value="C:cytoplasm"/>
    <property type="evidence" value="ECO:0007669"/>
    <property type="project" value="UniProtKB-SubCell"/>
</dbReference>
<dbReference type="GO" id="GO:0003864">
    <property type="term" value="F:3-methyl-2-oxobutanoate hydroxymethyltransferase activity"/>
    <property type="evidence" value="ECO:0007669"/>
    <property type="project" value="UniProtKB-UniRule"/>
</dbReference>
<dbReference type="GO" id="GO:0000287">
    <property type="term" value="F:magnesium ion binding"/>
    <property type="evidence" value="ECO:0007669"/>
    <property type="project" value="TreeGrafter"/>
</dbReference>
<dbReference type="GO" id="GO:0015940">
    <property type="term" value="P:pantothenate biosynthetic process"/>
    <property type="evidence" value="ECO:0007669"/>
    <property type="project" value="UniProtKB-UniRule"/>
</dbReference>
<dbReference type="CDD" id="cd06557">
    <property type="entry name" value="KPHMT-like"/>
    <property type="match status" value="1"/>
</dbReference>
<dbReference type="FunFam" id="3.20.20.60:FF:000003">
    <property type="entry name" value="3-methyl-2-oxobutanoate hydroxymethyltransferase"/>
    <property type="match status" value="1"/>
</dbReference>
<dbReference type="Gene3D" id="3.20.20.60">
    <property type="entry name" value="Phosphoenolpyruvate-binding domains"/>
    <property type="match status" value="1"/>
</dbReference>
<dbReference type="HAMAP" id="MF_00156">
    <property type="entry name" value="PanB"/>
    <property type="match status" value="1"/>
</dbReference>
<dbReference type="InterPro" id="IPR003700">
    <property type="entry name" value="Pantoate_hydroxy_MeTrfase"/>
</dbReference>
<dbReference type="InterPro" id="IPR015813">
    <property type="entry name" value="Pyrv/PenolPyrv_kinase-like_dom"/>
</dbReference>
<dbReference type="InterPro" id="IPR040442">
    <property type="entry name" value="Pyrv_kinase-like_dom_sf"/>
</dbReference>
<dbReference type="NCBIfam" id="TIGR00222">
    <property type="entry name" value="panB"/>
    <property type="match status" value="1"/>
</dbReference>
<dbReference type="NCBIfam" id="NF001452">
    <property type="entry name" value="PRK00311.1"/>
    <property type="match status" value="1"/>
</dbReference>
<dbReference type="PANTHER" id="PTHR20881">
    <property type="entry name" value="3-METHYL-2-OXOBUTANOATE HYDROXYMETHYLTRANSFERASE"/>
    <property type="match status" value="1"/>
</dbReference>
<dbReference type="PANTHER" id="PTHR20881:SF0">
    <property type="entry name" value="3-METHYL-2-OXOBUTANOATE HYDROXYMETHYLTRANSFERASE"/>
    <property type="match status" value="1"/>
</dbReference>
<dbReference type="Pfam" id="PF02548">
    <property type="entry name" value="Pantoate_transf"/>
    <property type="match status" value="1"/>
</dbReference>
<dbReference type="PIRSF" id="PIRSF000388">
    <property type="entry name" value="Pantoate_hydroxy_MeTrfase"/>
    <property type="match status" value="1"/>
</dbReference>
<dbReference type="SUPFAM" id="SSF51621">
    <property type="entry name" value="Phosphoenolpyruvate/pyruvate domain"/>
    <property type="match status" value="1"/>
</dbReference>
<accession>Q2SYZ1</accession>
<sequence>MTYLQESSRPAVTVPKLQAMREAGEKIAMLTCYDASFAALLDRANVDVQLIGDSLGNVLQGQTTTLPVTLDDIAYHTACVARAQPRALIVADLPFGTYGTPADAFASAVKLMRAGAQMVKFEGGEWLAETVRFLVERAVPVCAHVGLTPQSVHAFGGFKVQGKTEAGAAQLLRDARAVEEAGAQLIVLEAVPTLVAAEVTRELSIPTIGIGAGAECSGQVLVLHDMLGVFPGKRPRFVKDFMQGQPSIFAAVEAYVRAVKDGSFPGPEHSF</sequence>
<gene>
    <name evidence="1" type="primary">panB</name>
    <name type="ordered locus">BTH_I1311</name>
</gene>
<comment type="function">
    <text evidence="1">Catalyzes the reversible reaction in which hydroxymethyl group from 5,10-methylenetetrahydrofolate is transferred onto alpha-ketoisovalerate to form ketopantoate.</text>
</comment>
<comment type="catalytic activity">
    <reaction evidence="1">
        <text>3-methyl-2-oxobutanoate + (6R)-5,10-methylene-5,6,7,8-tetrahydrofolate + H2O = 2-dehydropantoate + (6S)-5,6,7,8-tetrahydrofolate</text>
        <dbReference type="Rhea" id="RHEA:11824"/>
        <dbReference type="ChEBI" id="CHEBI:11561"/>
        <dbReference type="ChEBI" id="CHEBI:11851"/>
        <dbReference type="ChEBI" id="CHEBI:15377"/>
        <dbReference type="ChEBI" id="CHEBI:15636"/>
        <dbReference type="ChEBI" id="CHEBI:57453"/>
        <dbReference type="EC" id="2.1.2.11"/>
    </reaction>
</comment>
<comment type="cofactor">
    <cofactor evidence="1">
        <name>Mg(2+)</name>
        <dbReference type="ChEBI" id="CHEBI:18420"/>
    </cofactor>
    <text evidence="1">Binds 1 Mg(2+) ion per subunit.</text>
</comment>
<comment type="pathway">
    <text evidence="1">Cofactor biosynthesis; (R)-pantothenate biosynthesis; (R)-pantoate from 3-methyl-2-oxobutanoate: step 1/2.</text>
</comment>
<comment type="subunit">
    <text evidence="1">Homodecamer; pentamer of dimers.</text>
</comment>
<comment type="subcellular location">
    <subcellularLocation>
        <location evidence="1">Cytoplasm</location>
    </subcellularLocation>
</comment>
<comment type="similarity">
    <text evidence="1">Belongs to the PanB family.</text>
</comment>
<comment type="sequence caution" evidence="2">
    <conflict type="erroneous initiation">
        <sequence resource="EMBL-CDS" id="ABC38840"/>
    </conflict>
</comment>
<proteinExistence type="evidence at protein level"/>
<organism>
    <name type="scientific">Burkholderia thailandensis (strain ATCC 700388 / DSM 13276 / CCUG 48851 / CIP 106301 / E264)</name>
    <dbReference type="NCBI Taxonomy" id="271848"/>
    <lineage>
        <taxon>Bacteria</taxon>
        <taxon>Pseudomonadati</taxon>
        <taxon>Pseudomonadota</taxon>
        <taxon>Betaproteobacteria</taxon>
        <taxon>Burkholderiales</taxon>
        <taxon>Burkholderiaceae</taxon>
        <taxon>Burkholderia</taxon>
        <taxon>pseudomallei group</taxon>
    </lineage>
</organism>
<feature type="chain" id="PRO_0000297237" description="3-methyl-2-oxobutanoate hydroxymethyltransferase">
    <location>
        <begin position="1"/>
        <end position="271"/>
    </location>
</feature>
<feature type="active site" description="Proton acceptor" evidence="1">
    <location>
        <position position="189"/>
    </location>
</feature>
<feature type="binding site" evidence="1">
    <location>
        <begin position="53"/>
        <end position="54"/>
    </location>
    <ligand>
        <name>3-methyl-2-oxobutanoate</name>
        <dbReference type="ChEBI" id="CHEBI:11851"/>
    </ligand>
</feature>
<feature type="binding site" evidence="1">
    <location>
        <position position="53"/>
    </location>
    <ligand>
        <name>Mg(2+)</name>
        <dbReference type="ChEBI" id="CHEBI:18420"/>
    </ligand>
</feature>
<feature type="binding site" evidence="1">
    <location>
        <position position="92"/>
    </location>
    <ligand>
        <name>3-methyl-2-oxobutanoate</name>
        <dbReference type="ChEBI" id="CHEBI:11851"/>
    </ligand>
</feature>
<feature type="binding site" evidence="1">
    <location>
        <position position="92"/>
    </location>
    <ligand>
        <name>Mg(2+)</name>
        <dbReference type="ChEBI" id="CHEBI:18420"/>
    </ligand>
</feature>
<feature type="binding site" evidence="1">
    <location>
        <position position="120"/>
    </location>
    <ligand>
        <name>3-methyl-2-oxobutanoate</name>
        <dbReference type="ChEBI" id="CHEBI:11851"/>
    </ligand>
</feature>
<feature type="binding site" evidence="1">
    <location>
        <position position="122"/>
    </location>
    <ligand>
        <name>Mg(2+)</name>
        <dbReference type="ChEBI" id="CHEBI:18420"/>
    </ligand>
</feature>
<feature type="helix" evidence="3">
    <location>
        <begin position="14"/>
        <end position="23"/>
    </location>
</feature>
<feature type="strand" evidence="3">
    <location>
        <begin position="27"/>
        <end position="31"/>
    </location>
</feature>
<feature type="helix" evidence="3">
    <location>
        <begin position="35"/>
        <end position="43"/>
    </location>
</feature>
<feature type="strand" evidence="3">
    <location>
        <begin position="47"/>
        <end position="51"/>
    </location>
</feature>
<feature type="helix" evidence="3">
    <location>
        <begin position="55"/>
        <end position="58"/>
    </location>
</feature>
<feature type="strand" evidence="3">
    <location>
        <begin position="63"/>
        <end position="65"/>
    </location>
</feature>
<feature type="helix" evidence="3">
    <location>
        <begin position="70"/>
        <end position="82"/>
    </location>
</feature>
<feature type="strand" evidence="3">
    <location>
        <begin position="86"/>
        <end position="92"/>
    </location>
</feature>
<feature type="helix" evidence="3">
    <location>
        <begin position="101"/>
        <end position="113"/>
    </location>
</feature>
<feature type="strand" evidence="3">
    <location>
        <begin position="117"/>
        <end position="122"/>
    </location>
</feature>
<feature type="helix" evidence="3">
    <location>
        <begin position="125"/>
        <end position="127"/>
    </location>
</feature>
<feature type="helix" evidence="3">
    <location>
        <begin position="128"/>
        <end position="136"/>
    </location>
</feature>
<feature type="strand" evidence="3">
    <location>
        <begin position="141"/>
        <end position="147"/>
    </location>
</feature>
<feature type="helix" evidence="3">
    <location>
        <begin position="149"/>
        <end position="151"/>
    </location>
</feature>
<feature type="helix" evidence="3">
    <location>
        <begin position="152"/>
        <end position="155"/>
    </location>
</feature>
<feature type="helix" evidence="3">
    <location>
        <begin position="165"/>
        <end position="181"/>
    </location>
</feature>
<feature type="strand" evidence="3">
    <location>
        <begin position="184"/>
        <end position="190"/>
    </location>
</feature>
<feature type="helix" evidence="3">
    <location>
        <begin position="193"/>
        <end position="202"/>
    </location>
</feature>
<feature type="strand" evidence="3">
    <location>
        <begin position="207"/>
        <end position="212"/>
    </location>
</feature>
<feature type="strand" evidence="3">
    <location>
        <begin position="216"/>
        <end position="221"/>
    </location>
</feature>
<feature type="helix" evidence="3">
    <location>
        <begin position="223"/>
        <end position="226"/>
    </location>
</feature>
<feature type="helix" evidence="3">
    <location>
        <begin position="248"/>
        <end position="260"/>
    </location>
</feature>
<feature type="helix" evidence="3">
    <location>
        <begin position="267"/>
        <end position="269"/>
    </location>
</feature>
<evidence type="ECO:0000255" key="1">
    <source>
        <dbReference type="HAMAP-Rule" id="MF_00156"/>
    </source>
</evidence>
<evidence type="ECO:0000305" key="2"/>
<evidence type="ECO:0007829" key="3">
    <source>
        <dbReference type="PDB" id="3VAV"/>
    </source>
</evidence>
<keyword id="KW-0002">3D-structure</keyword>
<keyword id="KW-0963">Cytoplasm</keyword>
<keyword id="KW-0460">Magnesium</keyword>
<keyword id="KW-0479">Metal-binding</keyword>
<keyword id="KW-0566">Pantothenate biosynthesis</keyword>
<keyword id="KW-0808">Transferase</keyword>
<protein>
    <recommendedName>
        <fullName evidence="1">3-methyl-2-oxobutanoate hydroxymethyltransferase</fullName>
        <ecNumber evidence="1">2.1.2.11</ecNumber>
    </recommendedName>
    <alternativeName>
        <fullName evidence="1">Ketopantoate hydroxymethyltransferase</fullName>
        <shortName evidence="1">KPHMT</shortName>
    </alternativeName>
</protein>